<name>DNLJ_STAS1</name>
<protein>
    <recommendedName>
        <fullName evidence="1">DNA ligase</fullName>
        <ecNumber evidence="1">6.5.1.2</ecNumber>
    </recommendedName>
    <alternativeName>
        <fullName evidence="1">Polydeoxyribonucleotide synthase [NAD(+)]</fullName>
    </alternativeName>
</protein>
<dbReference type="EC" id="6.5.1.2" evidence="1"/>
<dbReference type="EMBL" id="AP008934">
    <property type="protein sequence ID" value="BAE18032.1"/>
    <property type="molecule type" value="Genomic_DNA"/>
</dbReference>
<dbReference type="RefSeq" id="WP_011302764.1">
    <property type="nucleotide sequence ID" value="NZ_MTGA01000031.1"/>
</dbReference>
<dbReference type="SMR" id="Q49YU8"/>
<dbReference type="GeneID" id="3617083"/>
<dbReference type="KEGG" id="ssp:SSP0887"/>
<dbReference type="PATRIC" id="fig|342451.11.peg.886"/>
<dbReference type="eggNOG" id="COG0272">
    <property type="taxonomic scope" value="Bacteria"/>
</dbReference>
<dbReference type="HOGENOM" id="CLU_007764_2_1_9"/>
<dbReference type="OrthoDB" id="9759736at2"/>
<dbReference type="Proteomes" id="UP000006371">
    <property type="component" value="Chromosome"/>
</dbReference>
<dbReference type="GO" id="GO:0005829">
    <property type="term" value="C:cytosol"/>
    <property type="evidence" value="ECO:0007669"/>
    <property type="project" value="TreeGrafter"/>
</dbReference>
<dbReference type="GO" id="GO:0003677">
    <property type="term" value="F:DNA binding"/>
    <property type="evidence" value="ECO:0007669"/>
    <property type="project" value="InterPro"/>
</dbReference>
<dbReference type="GO" id="GO:0003911">
    <property type="term" value="F:DNA ligase (NAD+) activity"/>
    <property type="evidence" value="ECO:0007669"/>
    <property type="project" value="UniProtKB-UniRule"/>
</dbReference>
<dbReference type="GO" id="GO:0046872">
    <property type="term" value="F:metal ion binding"/>
    <property type="evidence" value="ECO:0007669"/>
    <property type="project" value="UniProtKB-KW"/>
</dbReference>
<dbReference type="GO" id="GO:0006281">
    <property type="term" value="P:DNA repair"/>
    <property type="evidence" value="ECO:0007669"/>
    <property type="project" value="UniProtKB-KW"/>
</dbReference>
<dbReference type="GO" id="GO:0006260">
    <property type="term" value="P:DNA replication"/>
    <property type="evidence" value="ECO:0007669"/>
    <property type="project" value="UniProtKB-KW"/>
</dbReference>
<dbReference type="CDD" id="cd17748">
    <property type="entry name" value="BRCT_DNA_ligase_like"/>
    <property type="match status" value="1"/>
</dbReference>
<dbReference type="CDD" id="cd00114">
    <property type="entry name" value="LIGANc"/>
    <property type="match status" value="1"/>
</dbReference>
<dbReference type="FunFam" id="1.10.150.20:FF:000006">
    <property type="entry name" value="DNA ligase"/>
    <property type="match status" value="1"/>
</dbReference>
<dbReference type="FunFam" id="1.10.150.20:FF:000007">
    <property type="entry name" value="DNA ligase"/>
    <property type="match status" value="1"/>
</dbReference>
<dbReference type="FunFam" id="1.10.287.610:FF:000002">
    <property type="entry name" value="DNA ligase"/>
    <property type="match status" value="1"/>
</dbReference>
<dbReference type="FunFam" id="2.40.50.140:FF:000012">
    <property type="entry name" value="DNA ligase"/>
    <property type="match status" value="1"/>
</dbReference>
<dbReference type="FunFam" id="3.30.470.30:FF:000001">
    <property type="entry name" value="DNA ligase"/>
    <property type="match status" value="1"/>
</dbReference>
<dbReference type="FunFam" id="6.20.10.30:FF:000002">
    <property type="entry name" value="DNA ligase"/>
    <property type="match status" value="1"/>
</dbReference>
<dbReference type="Gene3D" id="6.20.10.30">
    <property type="match status" value="1"/>
</dbReference>
<dbReference type="Gene3D" id="1.10.150.20">
    <property type="entry name" value="5' to 3' exonuclease, C-terminal subdomain"/>
    <property type="match status" value="2"/>
</dbReference>
<dbReference type="Gene3D" id="3.40.50.10190">
    <property type="entry name" value="BRCT domain"/>
    <property type="match status" value="1"/>
</dbReference>
<dbReference type="Gene3D" id="3.30.470.30">
    <property type="entry name" value="DNA ligase/mRNA capping enzyme"/>
    <property type="match status" value="1"/>
</dbReference>
<dbReference type="Gene3D" id="1.10.287.610">
    <property type="entry name" value="Helix hairpin bin"/>
    <property type="match status" value="1"/>
</dbReference>
<dbReference type="Gene3D" id="2.40.50.140">
    <property type="entry name" value="Nucleic acid-binding proteins"/>
    <property type="match status" value="1"/>
</dbReference>
<dbReference type="HAMAP" id="MF_01588">
    <property type="entry name" value="DNA_ligase_A"/>
    <property type="match status" value="1"/>
</dbReference>
<dbReference type="InterPro" id="IPR001357">
    <property type="entry name" value="BRCT_dom"/>
</dbReference>
<dbReference type="InterPro" id="IPR036420">
    <property type="entry name" value="BRCT_dom_sf"/>
</dbReference>
<dbReference type="InterPro" id="IPR041663">
    <property type="entry name" value="DisA/LigA_HHH"/>
</dbReference>
<dbReference type="InterPro" id="IPR001679">
    <property type="entry name" value="DNA_ligase"/>
</dbReference>
<dbReference type="InterPro" id="IPR018239">
    <property type="entry name" value="DNA_ligase_AS"/>
</dbReference>
<dbReference type="InterPro" id="IPR033136">
    <property type="entry name" value="DNA_ligase_CS"/>
</dbReference>
<dbReference type="InterPro" id="IPR013839">
    <property type="entry name" value="DNAligase_adenylation"/>
</dbReference>
<dbReference type="InterPro" id="IPR013840">
    <property type="entry name" value="DNAligase_N"/>
</dbReference>
<dbReference type="InterPro" id="IPR003583">
    <property type="entry name" value="Hlx-hairpin-Hlx_DNA-bd_motif"/>
</dbReference>
<dbReference type="InterPro" id="IPR012340">
    <property type="entry name" value="NA-bd_OB-fold"/>
</dbReference>
<dbReference type="InterPro" id="IPR004150">
    <property type="entry name" value="NAD_DNA_ligase_OB"/>
</dbReference>
<dbReference type="InterPro" id="IPR010994">
    <property type="entry name" value="RuvA_2-like"/>
</dbReference>
<dbReference type="InterPro" id="IPR004149">
    <property type="entry name" value="Znf_DNAligase_C4"/>
</dbReference>
<dbReference type="NCBIfam" id="TIGR00575">
    <property type="entry name" value="dnlj"/>
    <property type="match status" value="1"/>
</dbReference>
<dbReference type="NCBIfam" id="NF005932">
    <property type="entry name" value="PRK07956.1"/>
    <property type="match status" value="1"/>
</dbReference>
<dbReference type="PANTHER" id="PTHR23389">
    <property type="entry name" value="CHROMOSOME TRANSMISSION FIDELITY FACTOR 18"/>
    <property type="match status" value="1"/>
</dbReference>
<dbReference type="PANTHER" id="PTHR23389:SF9">
    <property type="entry name" value="DNA LIGASE"/>
    <property type="match status" value="1"/>
</dbReference>
<dbReference type="Pfam" id="PF00533">
    <property type="entry name" value="BRCT"/>
    <property type="match status" value="1"/>
</dbReference>
<dbReference type="Pfam" id="PF01653">
    <property type="entry name" value="DNA_ligase_aden"/>
    <property type="match status" value="1"/>
</dbReference>
<dbReference type="Pfam" id="PF03120">
    <property type="entry name" value="DNA_ligase_OB"/>
    <property type="match status" value="1"/>
</dbReference>
<dbReference type="Pfam" id="PF03119">
    <property type="entry name" value="DNA_ligase_ZBD"/>
    <property type="match status" value="1"/>
</dbReference>
<dbReference type="Pfam" id="PF12826">
    <property type="entry name" value="HHH_2"/>
    <property type="match status" value="1"/>
</dbReference>
<dbReference type="Pfam" id="PF14520">
    <property type="entry name" value="HHH_5"/>
    <property type="match status" value="1"/>
</dbReference>
<dbReference type="Pfam" id="PF22745">
    <property type="entry name" value="Nlig-Ia"/>
    <property type="match status" value="1"/>
</dbReference>
<dbReference type="PIRSF" id="PIRSF001604">
    <property type="entry name" value="LigA"/>
    <property type="match status" value="1"/>
</dbReference>
<dbReference type="SMART" id="SM00292">
    <property type="entry name" value="BRCT"/>
    <property type="match status" value="1"/>
</dbReference>
<dbReference type="SMART" id="SM00278">
    <property type="entry name" value="HhH1"/>
    <property type="match status" value="3"/>
</dbReference>
<dbReference type="SMART" id="SM00532">
    <property type="entry name" value="LIGANc"/>
    <property type="match status" value="1"/>
</dbReference>
<dbReference type="SUPFAM" id="SSF52113">
    <property type="entry name" value="BRCT domain"/>
    <property type="match status" value="1"/>
</dbReference>
<dbReference type="SUPFAM" id="SSF56091">
    <property type="entry name" value="DNA ligase/mRNA capping enzyme, catalytic domain"/>
    <property type="match status" value="1"/>
</dbReference>
<dbReference type="SUPFAM" id="SSF50249">
    <property type="entry name" value="Nucleic acid-binding proteins"/>
    <property type="match status" value="1"/>
</dbReference>
<dbReference type="SUPFAM" id="SSF47781">
    <property type="entry name" value="RuvA domain 2-like"/>
    <property type="match status" value="1"/>
</dbReference>
<dbReference type="PROSITE" id="PS50172">
    <property type="entry name" value="BRCT"/>
    <property type="match status" value="1"/>
</dbReference>
<dbReference type="PROSITE" id="PS01055">
    <property type="entry name" value="DNA_LIGASE_N1"/>
    <property type="match status" value="1"/>
</dbReference>
<dbReference type="PROSITE" id="PS01056">
    <property type="entry name" value="DNA_LIGASE_N2"/>
    <property type="match status" value="1"/>
</dbReference>
<reference key="1">
    <citation type="journal article" date="2005" name="Proc. Natl. Acad. Sci. U.S.A.">
        <title>Whole genome sequence of Staphylococcus saprophyticus reveals the pathogenesis of uncomplicated urinary tract infection.</title>
        <authorList>
            <person name="Kuroda M."/>
            <person name="Yamashita A."/>
            <person name="Hirakawa H."/>
            <person name="Kumano M."/>
            <person name="Morikawa K."/>
            <person name="Higashide M."/>
            <person name="Maruyama A."/>
            <person name="Inose Y."/>
            <person name="Matoba K."/>
            <person name="Toh H."/>
            <person name="Kuhara S."/>
            <person name="Hattori M."/>
            <person name="Ohta T."/>
        </authorList>
    </citation>
    <scope>NUCLEOTIDE SEQUENCE [LARGE SCALE GENOMIC DNA]</scope>
    <source>
        <strain>ATCC 15305 / DSM 20229 / NCIMB 8711 / NCTC 7292 / S-41</strain>
    </source>
</reference>
<comment type="function">
    <text evidence="1">DNA ligase that catalyzes the formation of phosphodiester linkages between 5'-phosphoryl and 3'-hydroxyl groups in double-stranded DNA using NAD as a coenzyme and as the energy source for the reaction. It is essential for DNA replication and repair of damaged DNA.</text>
</comment>
<comment type="catalytic activity">
    <reaction evidence="1">
        <text>NAD(+) + (deoxyribonucleotide)n-3'-hydroxyl + 5'-phospho-(deoxyribonucleotide)m = (deoxyribonucleotide)n+m + AMP + beta-nicotinamide D-nucleotide.</text>
        <dbReference type="EC" id="6.5.1.2"/>
    </reaction>
</comment>
<comment type="cofactor">
    <cofactor evidence="1">
        <name>Mg(2+)</name>
        <dbReference type="ChEBI" id="CHEBI:18420"/>
    </cofactor>
    <cofactor evidence="1">
        <name>Mn(2+)</name>
        <dbReference type="ChEBI" id="CHEBI:29035"/>
    </cofactor>
</comment>
<comment type="similarity">
    <text evidence="1">Belongs to the NAD-dependent DNA ligase family. LigA subfamily.</text>
</comment>
<accession>Q49YU8</accession>
<evidence type="ECO:0000255" key="1">
    <source>
        <dbReference type="HAMAP-Rule" id="MF_01588"/>
    </source>
</evidence>
<organism>
    <name type="scientific">Staphylococcus saprophyticus subsp. saprophyticus (strain ATCC 15305 / DSM 20229 / NCIMB 8711 / NCTC 7292 / S-41)</name>
    <dbReference type="NCBI Taxonomy" id="342451"/>
    <lineage>
        <taxon>Bacteria</taxon>
        <taxon>Bacillati</taxon>
        <taxon>Bacillota</taxon>
        <taxon>Bacilli</taxon>
        <taxon>Bacillales</taxon>
        <taxon>Staphylococcaceae</taxon>
        <taxon>Staphylococcus</taxon>
    </lineage>
</organism>
<sequence>MADIQSRVDELHRLLNQYSYEYYVKDNPSVPDSEYDKLLHELIDIETQHPEYRTADSPTVRVGGSAQSTFEKVNHDTPMLSLGNAFNEEDLRKFDQRIRDNIGNVEYMCELKIDGLAVSLKYENGRFVQGLTRGDGTTGEDITENLKTIHAIPLKINESRTFEVRGEAYMPRKSFVNLNEAKAANEEQPFANPRNAAAGSLRQLDSKLAAKRKLSVFLYSVNDFTQFNADTQSEALDELDQLGFKTNQERQRVQTIEEVMTYIDKWTKQRENLPYDIDGIVIKVNALEQQETLGFTQKSPRWAIAYKFPAEEVVTELLDIELSIGRTGVVTPTAVLEPVRVAGTTVSRASLHNEDLIHDKDIRIGDSVVIKKAGDIIPEVIKSVLDRRPDDAEIYHMPSHCPSCEHELVRIEGEVALRCINPKCQAQLVEGLIHFVSRQAMNIDGLGTKIIQQLYENEKIKDVADIFYLTKEDLLPLDRMGEKKVDNLLNAIEKAKSNSLEQLLFGLGIRHLGVKASQVIAEKYGTIDELFHVTEEALMDIHDVGHKLAQSVVTYLENEDIRALIDKLKAKNVNMIYKGVKTTELEGHPDFKDKTIVLTGKLYQMTRNEASNWLALQGAKVTNSVTKNTDLVIAGEDAGSKLAKAEKFGTEIWSEEAFVQKQNEIEG</sequence>
<feature type="chain" id="PRO_0000161766" description="DNA ligase">
    <location>
        <begin position="1"/>
        <end position="667"/>
    </location>
</feature>
<feature type="domain" description="BRCT" evidence="1">
    <location>
        <begin position="586"/>
        <end position="667"/>
    </location>
</feature>
<feature type="active site" description="N6-AMP-lysine intermediate" evidence="1">
    <location>
        <position position="112"/>
    </location>
</feature>
<feature type="binding site" evidence="1">
    <location>
        <begin position="32"/>
        <end position="36"/>
    </location>
    <ligand>
        <name>NAD(+)</name>
        <dbReference type="ChEBI" id="CHEBI:57540"/>
    </ligand>
</feature>
<feature type="binding site" evidence="1">
    <location>
        <begin position="81"/>
        <end position="82"/>
    </location>
    <ligand>
        <name>NAD(+)</name>
        <dbReference type="ChEBI" id="CHEBI:57540"/>
    </ligand>
</feature>
<feature type="binding site" evidence="1">
    <location>
        <position position="110"/>
    </location>
    <ligand>
        <name>NAD(+)</name>
        <dbReference type="ChEBI" id="CHEBI:57540"/>
    </ligand>
</feature>
<feature type="binding site" evidence="1">
    <location>
        <position position="133"/>
    </location>
    <ligand>
        <name>NAD(+)</name>
        <dbReference type="ChEBI" id="CHEBI:57540"/>
    </ligand>
</feature>
<feature type="binding site" evidence="1">
    <location>
        <position position="167"/>
    </location>
    <ligand>
        <name>NAD(+)</name>
        <dbReference type="ChEBI" id="CHEBI:57540"/>
    </ligand>
</feature>
<feature type="binding site" evidence="1">
    <location>
        <position position="283"/>
    </location>
    <ligand>
        <name>NAD(+)</name>
        <dbReference type="ChEBI" id="CHEBI:57540"/>
    </ligand>
</feature>
<feature type="binding site" evidence="1">
    <location>
        <position position="307"/>
    </location>
    <ligand>
        <name>NAD(+)</name>
        <dbReference type="ChEBI" id="CHEBI:57540"/>
    </ligand>
</feature>
<feature type="binding site" evidence="1">
    <location>
        <position position="401"/>
    </location>
    <ligand>
        <name>Zn(2+)</name>
        <dbReference type="ChEBI" id="CHEBI:29105"/>
    </ligand>
</feature>
<feature type="binding site" evidence="1">
    <location>
        <position position="404"/>
    </location>
    <ligand>
        <name>Zn(2+)</name>
        <dbReference type="ChEBI" id="CHEBI:29105"/>
    </ligand>
</feature>
<feature type="binding site" evidence="1">
    <location>
        <position position="419"/>
    </location>
    <ligand>
        <name>Zn(2+)</name>
        <dbReference type="ChEBI" id="CHEBI:29105"/>
    </ligand>
</feature>
<feature type="binding site" evidence="1">
    <location>
        <position position="424"/>
    </location>
    <ligand>
        <name>Zn(2+)</name>
        <dbReference type="ChEBI" id="CHEBI:29105"/>
    </ligand>
</feature>
<proteinExistence type="inferred from homology"/>
<keyword id="KW-0227">DNA damage</keyword>
<keyword id="KW-0234">DNA repair</keyword>
<keyword id="KW-0235">DNA replication</keyword>
<keyword id="KW-0436">Ligase</keyword>
<keyword id="KW-0460">Magnesium</keyword>
<keyword id="KW-0464">Manganese</keyword>
<keyword id="KW-0479">Metal-binding</keyword>
<keyword id="KW-0520">NAD</keyword>
<keyword id="KW-1185">Reference proteome</keyword>
<keyword id="KW-0862">Zinc</keyword>
<gene>
    <name evidence="1" type="primary">ligA</name>
    <name type="synonym">lig</name>
    <name type="ordered locus">SSP0887</name>
</gene>